<organism>
    <name type="scientific">Myxococcus xanthus</name>
    <dbReference type="NCBI Taxonomy" id="34"/>
    <lineage>
        <taxon>Bacteria</taxon>
        <taxon>Pseudomonadati</taxon>
        <taxon>Myxococcota</taxon>
        <taxon>Myxococcia</taxon>
        <taxon>Myxococcales</taxon>
        <taxon>Cystobacterineae</taxon>
        <taxon>Myxococcaceae</taxon>
        <taxon>Myxococcus</taxon>
    </lineage>
</organism>
<proteinExistence type="evidence at protein level"/>
<gene>
    <name type="primary">frzCD</name>
</gene>
<keyword id="KW-0145">Chemotaxis</keyword>
<keyword id="KW-0963">Cytoplasm</keyword>
<keyword id="KW-0488">Methylation</keyword>
<keyword id="KW-0807">Transducer</keyword>
<reference key="1">
    <citation type="journal article" date="1989" name="Proc. Natl. Acad. Sci. U.S.A.">
        <title>'Frizzy' aggregation genes of the gliding bacterium Myxococcus xanthus show sequence similarities to the chemotaxis genes of enteric bacteria.</title>
        <authorList>
            <person name="McBride M.J."/>
            <person name="Weinberg R.A."/>
            <person name="Zusman D.R."/>
        </authorList>
    </citation>
    <scope>NUCLEOTIDE SEQUENCE [GENOMIC DNA]</scope>
</reference>
<reference key="2">
    <citation type="journal article" date="1992" name="J. Bacteriol.">
        <title>Methylation of FrzCD, a methyl-accepting taxis protein of Myxococcus xanthus, is correlated with factors affecting cell behavior.</title>
        <authorList>
            <person name="McBride M.J."/>
            <person name="Kohler T."/>
            <person name="Zusman D.R."/>
        </authorList>
    </citation>
    <scope>CHARACTERIZATION</scope>
</reference>
<name>FRZCD_MYXXA</name>
<evidence type="ECO:0000255" key="1">
    <source>
        <dbReference type="PROSITE-ProRule" id="PRU00284"/>
    </source>
</evidence>
<evidence type="ECO:0000256" key="2">
    <source>
        <dbReference type="SAM" id="MobiDB-lite"/>
    </source>
</evidence>
<evidence type="ECO:0000305" key="3"/>
<accession>P43500</accession>
<comment type="function">
    <text>Methyl-accepting taxis protein necessary for the proper aggregation of cells to form fruiting bodies. Frz genes define a system of signal transduction analogous to the enterobacterial chemotaxis systems.</text>
</comment>
<comment type="subcellular location">
    <subcellularLocation>
        <location>Cytoplasm</location>
    </subcellularLocation>
</comment>
<comment type="PTM">
    <text>Methylated. Saturated fatty acids capric acid and lauric acid stimulate methylation. Short-chain alcohols, such as isoamyl alcohol, and some other solvents cause demethylation.</text>
</comment>
<comment type="similarity">
    <text evidence="3">Belongs to the methyl-accepting chemotaxis (MCP) protein family.</text>
</comment>
<feature type="chain" id="PRO_0000110546" description="Frizzy aggregation protein FrzCD">
    <location>
        <begin position="1"/>
        <end position="417"/>
    </location>
</feature>
<feature type="domain" description="Methyl-accepting transducer" evidence="1">
    <location>
        <begin position="144"/>
        <end position="380"/>
    </location>
</feature>
<feature type="region of interest" description="Disordered" evidence="2">
    <location>
        <begin position="1"/>
        <end position="34"/>
    </location>
</feature>
<feature type="compositionally biased region" description="Basic and acidic residues" evidence="2">
    <location>
        <begin position="1"/>
        <end position="11"/>
    </location>
</feature>
<feature type="compositionally biased region" description="Low complexity" evidence="2">
    <location>
        <begin position="21"/>
        <end position="34"/>
    </location>
</feature>
<sequence>MSLDTPNEKPAGKARARKAPASKAGATNAASTSSSTKAITDTLLTVLSGNLQARVPKELVGESGVELAHLLNQVLDQFAASEHRKHVAAQEIDQALDALIGLVREGDLSRWNTTTEDPQLGPLLEGFGKVIETLRTFVREINEAALRLSSSANQVLAASTQHETSSTEQAAAIHETTATMEELKHASAQIAENAGSVARVAEETLGAARAGRGAIGEFIQAMQQIRSDGVAVADSIAKLSKRVERIGTVVEVIDEIADRSDLLALNAALEGSRAGEAGKGFSIVAAEMRRLAENVLDSTKEIKNLITEIREATAAAAGAAEASKSATESGEKLGAVAAQAVEGILAGVQETSDAARVINLATQQQRTATEQVVASMAEIEDVTRQTTQASKQATGAAAELTQLAGRLAELIKRFKAD</sequence>
<protein>
    <recommendedName>
        <fullName>Frizzy aggregation protein FrzCD</fullName>
    </recommendedName>
</protein>
<dbReference type="EMBL" id="J04157">
    <property type="protein sequence ID" value="AAA25395.1"/>
    <property type="molecule type" value="Genomic_DNA"/>
</dbReference>
<dbReference type="PIR" id="C32185">
    <property type="entry name" value="C32185"/>
</dbReference>
<dbReference type="RefSeq" id="WP_011554144.1">
    <property type="nucleotide sequence ID" value="NZ_FNOH01000003.1"/>
</dbReference>
<dbReference type="SMR" id="P43500"/>
<dbReference type="OMA" id="KHASAQI"/>
<dbReference type="GO" id="GO:0005737">
    <property type="term" value="C:cytoplasm"/>
    <property type="evidence" value="ECO:0007669"/>
    <property type="project" value="UniProtKB-SubCell"/>
</dbReference>
<dbReference type="GO" id="GO:0005886">
    <property type="term" value="C:plasma membrane"/>
    <property type="evidence" value="ECO:0007669"/>
    <property type="project" value="TreeGrafter"/>
</dbReference>
<dbReference type="GO" id="GO:0004888">
    <property type="term" value="F:transmembrane signaling receptor activity"/>
    <property type="evidence" value="ECO:0007669"/>
    <property type="project" value="TreeGrafter"/>
</dbReference>
<dbReference type="GO" id="GO:0006935">
    <property type="term" value="P:chemotaxis"/>
    <property type="evidence" value="ECO:0007669"/>
    <property type="project" value="UniProtKB-KW"/>
</dbReference>
<dbReference type="GO" id="GO:0007165">
    <property type="term" value="P:signal transduction"/>
    <property type="evidence" value="ECO:0007669"/>
    <property type="project" value="UniProtKB-KW"/>
</dbReference>
<dbReference type="CDD" id="cd11386">
    <property type="entry name" value="MCP_signal"/>
    <property type="match status" value="1"/>
</dbReference>
<dbReference type="Gene3D" id="1.10.287.950">
    <property type="entry name" value="Methyl-accepting chemotaxis protein"/>
    <property type="match status" value="1"/>
</dbReference>
<dbReference type="InterPro" id="IPR051310">
    <property type="entry name" value="MCP_chemotaxis"/>
</dbReference>
<dbReference type="InterPro" id="IPR004089">
    <property type="entry name" value="MCPsignal_dom"/>
</dbReference>
<dbReference type="PANTHER" id="PTHR43531:SF11">
    <property type="entry name" value="METHYL-ACCEPTING CHEMOTAXIS PROTEIN 3"/>
    <property type="match status" value="1"/>
</dbReference>
<dbReference type="PANTHER" id="PTHR43531">
    <property type="entry name" value="PROTEIN ICFG"/>
    <property type="match status" value="1"/>
</dbReference>
<dbReference type="Pfam" id="PF00015">
    <property type="entry name" value="MCPsignal"/>
    <property type="match status" value="1"/>
</dbReference>
<dbReference type="SMART" id="SM00283">
    <property type="entry name" value="MA"/>
    <property type="match status" value="1"/>
</dbReference>
<dbReference type="SUPFAM" id="SSF58104">
    <property type="entry name" value="Methyl-accepting chemotaxis protein (MCP) signaling domain"/>
    <property type="match status" value="1"/>
</dbReference>
<dbReference type="PROSITE" id="PS50111">
    <property type="entry name" value="CHEMOTAXIS_TRANSDUC_2"/>
    <property type="match status" value="1"/>
</dbReference>